<name>MLP43_ARATH</name>
<keyword id="KW-0007">Acetylation</keyword>
<keyword id="KW-1185">Reference proteome</keyword>
<gene>
    <name type="primary">MLP43</name>
    <name type="ordered locus">At1g70890</name>
    <name type="ORF">F15H11.12</name>
</gene>
<feature type="initiator methionine" description="Removed" evidence="2">
    <location>
        <position position="1"/>
    </location>
</feature>
<feature type="chain" id="PRO_0000210071" description="MLP-like protein 43">
    <location>
        <begin position="2"/>
        <end position="158"/>
    </location>
</feature>
<feature type="modified residue" description="N-acetylalanine" evidence="2">
    <location>
        <position position="2"/>
    </location>
</feature>
<protein>
    <recommendedName>
        <fullName>MLP-like protein 43</fullName>
    </recommendedName>
</protein>
<comment type="similarity">
    <text evidence="1">Belongs to the MLP family.</text>
</comment>
<proteinExistence type="evidence at protein level"/>
<evidence type="ECO:0000305" key="1"/>
<evidence type="ECO:0007744" key="2">
    <source>
    </source>
</evidence>
<reference key="1">
    <citation type="submission" date="2001-01" db="EMBL/GenBank/DDBJ databases">
        <title>Molecular and phylogenetic analysis of a gene family in Arabidopsis thaliana with similarities to major latex, pathogenesis-related and ripening-induced proteins.</title>
        <authorList>
            <person name="Muller S."/>
            <person name="Klimt S."/>
            <person name="Hauser M.T."/>
        </authorList>
    </citation>
    <scope>NUCLEOTIDE SEQUENCE [GENOMIC DNA]</scope>
    <source>
        <strain>cv. Columbia</strain>
    </source>
</reference>
<reference key="2">
    <citation type="journal article" date="2000" name="Nature">
        <title>Sequence and analysis of chromosome 1 of the plant Arabidopsis thaliana.</title>
        <authorList>
            <person name="Theologis A."/>
            <person name="Ecker J.R."/>
            <person name="Palm C.J."/>
            <person name="Federspiel N.A."/>
            <person name="Kaul S."/>
            <person name="White O."/>
            <person name="Alonso J."/>
            <person name="Altafi H."/>
            <person name="Araujo R."/>
            <person name="Bowman C.L."/>
            <person name="Brooks S.Y."/>
            <person name="Buehler E."/>
            <person name="Chan A."/>
            <person name="Chao Q."/>
            <person name="Chen H."/>
            <person name="Cheuk R.F."/>
            <person name="Chin C.W."/>
            <person name="Chung M.K."/>
            <person name="Conn L."/>
            <person name="Conway A.B."/>
            <person name="Conway A.R."/>
            <person name="Creasy T.H."/>
            <person name="Dewar K."/>
            <person name="Dunn P."/>
            <person name="Etgu P."/>
            <person name="Feldblyum T.V."/>
            <person name="Feng J.-D."/>
            <person name="Fong B."/>
            <person name="Fujii C.Y."/>
            <person name="Gill J.E."/>
            <person name="Goldsmith A.D."/>
            <person name="Haas B."/>
            <person name="Hansen N.F."/>
            <person name="Hughes B."/>
            <person name="Huizar L."/>
            <person name="Hunter J.L."/>
            <person name="Jenkins J."/>
            <person name="Johnson-Hopson C."/>
            <person name="Khan S."/>
            <person name="Khaykin E."/>
            <person name="Kim C.J."/>
            <person name="Koo H.L."/>
            <person name="Kremenetskaia I."/>
            <person name="Kurtz D.B."/>
            <person name="Kwan A."/>
            <person name="Lam B."/>
            <person name="Langin-Hooper S."/>
            <person name="Lee A."/>
            <person name="Lee J.M."/>
            <person name="Lenz C.A."/>
            <person name="Li J.H."/>
            <person name="Li Y.-P."/>
            <person name="Lin X."/>
            <person name="Liu S.X."/>
            <person name="Liu Z.A."/>
            <person name="Luros J.S."/>
            <person name="Maiti R."/>
            <person name="Marziali A."/>
            <person name="Militscher J."/>
            <person name="Miranda M."/>
            <person name="Nguyen M."/>
            <person name="Nierman W.C."/>
            <person name="Osborne B.I."/>
            <person name="Pai G."/>
            <person name="Peterson J."/>
            <person name="Pham P.K."/>
            <person name="Rizzo M."/>
            <person name="Rooney T."/>
            <person name="Rowley D."/>
            <person name="Sakano H."/>
            <person name="Salzberg S.L."/>
            <person name="Schwartz J.R."/>
            <person name="Shinn P."/>
            <person name="Southwick A.M."/>
            <person name="Sun H."/>
            <person name="Tallon L.J."/>
            <person name="Tambunga G."/>
            <person name="Toriumi M.J."/>
            <person name="Town C.D."/>
            <person name="Utterback T."/>
            <person name="Van Aken S."/>
            <person name="Vaysberg M."/>
            <person name="Vysotskaia V.S."/>
            <person name="Walker M."/>
            <person name="Wu D."/>
            <person name="Yu G."/>
            <person name="Fraser C.M."/>
            <person name="Venter J.C."/>
            <person name="Davis R.W."/>
        </authorList>
    </citation>
    <scope>NUCLEOTIDE SEQUENCE [LARGE SCALE GENOMIC DNA]</scope>
    <source>
        <strain>cv. Columbia</strain>
    </source>
</reference>
<reference key="3">
    <citation type="journal article" date="2017" name="Plant J.">
        <title>Araport11: a complete reannotation of the Arabidopsis thaliana reference genome.</title>
        <authorList>
            <person name="Cheng C.Y."/>
            <person name="Krishnakumar V."/>
            <person name="Chan A.P."/>
            <person name="Thibaud-Nissen F."/>
            <person name="Schobel S."/>
            <person name="Town C.D."/>
        </authorList>
    </citation>
    <scope>GENOME REANNOTATION</scope>
    <source>
        <strain>cv. Columbia</strain>
    </source>
</reference>
<reference key="4">
    <citation type="journal article" date="2003" name="Science">
        <title>Empirical analysis of transcriptional activity in the Arabidopsis genome.</title>
        <authorList>
            <person name="Yamada K."/>
            <person name="Lim J."/>
            <person name="Dale J.M."/>
            <person name="Chen H."/>
            <person name="Shinn P."/>
            <person name="Palm C.J."/>
            <person name="Southwick A.M."/>
            <person name="Wu H.C."/>
            <person name="Kim C.J."/>
            <person name="Nguyen M."/>
            <person name="Pham P.K."/>
            <person name="Cheuk R.F."/>
            <person name="Karlin-Newmann G."/>
            <person name="Liu S.X."/>
            <person name="Lam B."/>
            <person name="Sakano H."/>
            <person name="Wu T."/>
            <person name="Yu G."/>
            <person name="Miranda M."/>
            <person name="Quach H.L."/>
            <person name="Tripp M."/>
            <person name="Chang C.H."/>
            <person name="Lee J.M."/>
            <person name="Toriumi M.J."/>
            <person name="Chan M.M."/>
            <person name="Tang C.C."/>
            <person name="Onodera C.S."/>
            <person name="Deng J.M."/>
            <person name="Akiyama K."/>
            <person name="Ansari Y."/>
            <person name="Arakawa T."/>
            <person name="Banh J."/>
            <person name="Banno F."/>
            <person name="Bowser L."/>
            <person name="Brooks S.Y."/>
            <person name="Carninci P."/>
            <person name="Chao Q."/>
            <person name="Choy N."/>
            <person name="Enju A."/>
            <person name="Goldsmith A.D."/>
            <person name="Gurjal M."/>
            <person name="Hansen N.F."/>
            <person name="Hayashizaki Y."/>
            <person name="Johnson-Hopson C."/>
            <person name="Hsuan V.W."/>
            <person name="Iida K."/>
            <person name="Karnes M."/>
            <person name="Khan S."/>
            <person name="Koesema E."/>
            <person name="Ishida J."/>
            <person name="Jiang P.X."/>
            <person name="Jones T."/>
            <person name="Kawai J."/>
            <person name="Kamiya A."/>
            <person name="Meyers C."/>
            <person name="Nakajima M."/>
            <person name="Narusaka M."/>
            <person name="Seki M."/>
            <person name="Sakurai T."/>
            <person name="Satou M."/>
            <person name="Tamse R."/>
            <person name="Vaysberg M."/>
            <person name="Wallender E.K."/>
            <person name="Wong C."/>
            <person name="Yamamura Y."/>
            <person name="Yuan S."/>
            <person name="Shinozaki K."/>
            <person name="Davis R.W."/>
            <person name="Theologis A."/>
            <person name="Ecker J.R."/>
        </authorList>
    </citation>
    <scope>NUCLEOTIDE SEQUENCE [LARGE SCALE MRNA]</scope>
    <source>
        <strain>cv. Columbia</strain>
    </source>
</reference>
<reference key="5">
    <citation type="journal article" date="2012" name="Mol. Cell. Proteomics">
        <title>Comparative large-scale characterisation of plant vs. mammal proteins reveals similar and idiosyncratic N-alpha acetylation features.</title>
        <authorList>
            <person name="Bienvenut W.V."/>
            <person name="Sumpton D."/>
            <person name="Martinez A."/>
            <person name="Lilla S."/>
            <person name="Espagne C."/>
            <person name="Meinnel T."/>
            <person name="Giglione C."/>
        </authorList>
    </citation>
    <scope>ACETYLATION [LARGE SCALE ANALYSIS] AT ALA-2</scope>
    <scope>CLEAVAGE OF INITIATOR METHIONINE [LARGE SCALE ANALYSIS]</scope>
    <scope>IDENTIFICATION BY MASS SPECTROMETRY [LARGE SCALE ANALYSIS]</scope>
</reference>
<organism>
    <name type="scientific">Arabidopsis thaliana</name>
    <name type="common">Mouse-ear cress</name>
    <dbReference type="NCBI Taxonomy" id="3702"/>
    <lineage>
        <taxon>Eukaryota</taxon>
        <taxon>Viridiplantae</taxon>
        <taxon>Streptophyta</taxon>
        <taxon>Embryophyta</taxon>
        <taxon>Tracheophyta</taxon>
        <taxon>Spermatophyta</taxon>
        <taxon>Magnoliopsida</taxon>
        <taxon>eudicotyledons</taxon>
        <taxon>Gunneridae</taxon>
        <taxon>Pentapetalae</taxon>
        <taxon>rosids</taxon>
        <taxon>malvids</taxon>
        <taxon>Brassicales</taxon>
        <taxon>Brassicaceae</taxon>
        <taxon>Camelineae</taxon>
        <taxon>Arabidopsis</taxon>
    </lineage>
</organism>
<dbReference type="EMBL" id="AJ306140">
    <property type="protein sequence ID" value="CAC83578.1"/>
    <property type="molecule type" value="Genomic_DNA"/>
</dbReference>
<dbReference type="EMBL" id="AC008148">
    <property type="protein sequence ID" value="AAD55504.1"/>
    <property type="molecule type" value="Genomic_DNA"/>
</dbReference>
<dbReference type="EMBL" id="CP002684">
    <property type="protein sequence ID" value="AEE35134.1"/>
    <property type="molecule type" value="Genomic_DNA"/>
</dbReference>
<dbReference type="EMBL" id="AY065135">
    <property type="protein sequence ID" value="AAL38311.1"/>
    <property type="molecule type" value="mRNA"/>
</dbReference>
<dbReference type="EMBL" id="BT008441">
    <property type="protein sequence ID" value="AAP37800.1"/>
    <property type="molecule type" value="mRNA"/>
</dbReference>
<dbReference type="PIR" id="E96733">
    <property type="entry name" value="E96733"/>
</dbReference>
<dbReference type="RefSeq" id="NP_177245.1">
    <property type="nucleotide sequence ID" value="NM_105756.4"/>
</dbReference>
<dbReference type="SMR" id="Q9SSK5"/>
<dbReference type="BioGRID" id="28647">
    <property type="interactions" value="1"/>
</dbReference>
<dbReference type="FunCoup" id="Q9SSK5">
    <property type="interactions" value="7"/>
</dbReference>
<dbReference type="STRING" id="3702.Q9SSK5"/>
<dbReference type="iPTMnet" id="Q9SSK5"/>
<dbReference type="MetOSite" id="Q9SSK5"/>
<dbReference type="PaxDb" id="3702-AT1G70890.1"/>
<dbReference type="ProteomicsDB" id="238710"/>
<dbReference type="EnsemblPlants" id="AT1G70890.1">
    <property type="protein sequence ID" value="AT1G70890.1"/>
    <property type="gene ID" value="AT1G70890"/>
</dbReference>
<dbReference type="GeneID" id="843427"/>
<dbReference type="Gramene" id="AT1G70890.1">
    <property type="protein sequence ID" value="AT1G70890.1"/>
    <property type="gene ID" value="AT1G70890"/>
</dbReference>
<dbReference type="KEGG" id="ath:AT1G70890"/>
<dbReference type="Araport" id="AT1G70890"/>
<dbReference type="TAIR" id="AT1G70890">
    <property type="gene designation" value="MLP43"/>
</dbReference>
<dbReference type="eggNOG" id="ENOG502RN75">
    <property type="taxonomic scope" value="Eukaryota"/>
</dbReference>
<dbReference type="HOGENOM" id="CLU_081988_1_0_1"/>
<dbReference type="InParanoid" id="Q9SSK5"/>
<dbReference type="OMA" id="VITWHVE"/>
<dbReference type="PhylomeDB" id="Q9SSK5"/>
<dbReference type="PRO" id="PR:Q9SSK5"/>
<dbReference type="Proteomes" id="UP000006548">
    <property type="component" value="Chromosome 1"/>
</dbReference>
<dbReference type="ExpressionAtlas" id="Q9SSK5">
    <property type="expression patterns" value="baseline and differential"/>
</dbReference>
<dbReference type="GO" id="GO:0009507">
    <property type="term" value="C:chloroplast"/>
    <property type="evidence" value="ECO:0007005"/>
    <property type="project" value="TAIR"/>
</dbReference>
<dbReference type="GO" id="GO:0005829">
    <property type="term" value="C:cytosol"/>
    <property type="evidence" value="ECO:0007005"/>
    <property type="project" value="TAIR"/>
</dbReference>
<dbReference type="GO" id="GO:0005739">
    <property type="term" value="C:mitochondrion"/>
    <property type="evidence" value="ECO:0007005"/>
    <property type="project" value="TAIR"/>
</dbReference>
<dbReference type="GO" id="GO:0006952">
    <property type="term" value="P:defense response"/>
    <property type="evidence" value="ECO:0007669"/>
    <property type="project" value="InterPro"/>
</dbReference>
<dbReference type="CDD" id="cd07816">
    <property type="entry name" value="Bet_v1-like"/>
    <property type="match status" value="1"/>
</dbReference>
<dbReference type="Gene3D" id="3.30.530.20">
    <property type="match status" value="1"/>
</dbReference>
<dbReference type="InterPro" id="IPR000916">
    <property type="entry name" value="Bet_v_I/MLP"/>
</dbReference>
<dbReference type="InterPro" id="IPR051761">
    <property type="entry name" value="MLP-like_ligand-binding"/>
</dbReference>
<dbReference type="InterPro" id="IPR023393">
    <property type="entry name" value="START-like_dom_sf"/>
</dbReference>
<dbReference type="PANTHER" id="PTHR31907">
    <property type="entry name" value="MLP-LIKE PROTEIN 423"/>
    <property type="match status" value="1"/>
</dbReference>
<dbReference type="Pfam" id="PF00407">
    <property type="entry name" value="Bet_v_1"/>
    <property type="match status" value="1"/>
</dbReference>
<dbReference type="SMART" id="SM01037">
    <property type="entry name" value="Bet_v_1"/>
    <property type="match status" value="1"/>
</dbReference>
<dbReference type="SUPFAM" id="SSF55961">
    <property type="entry name" value="Bet v1-like"/>
    <property type="match status" value="1"/>
</dbReference>
<sequence length="158" mass="17889">MAEASSLVGKLETEVEIKASAKKFHHMFTERPHHVSKATPDKIHGCELHEGDWGKVGSIVIWKYVHDGKLTVGKNKIEAVDPEKNLITFKVLEGDLMNEYKSFAFTLQVTPKQGESGSIAHWHLEYEKISEEVAHPETLLQFCVEISKEIDEHLLAEE</sequence>
<accession>Q9SSK5</accession>